<comment type="function">
    <text evidence="1">DNA-dependent RNA polymerase catalyzes the transcription of DNA into RNA using the four ribonucleoside triphosphates as substrates.</text>
</comment>
<comment type="catalytic activity">
    <reaction evidence="1">
        <text>RNA(n) + a ribonucleoside 5'-triphosphate = RNA(n+1) + diphosphate</text>
        <dbReference type="Rhea" id="RHEA:21248"/>
        <dbReference type="Rhea" id="RHEA-COMP:14527"/>
        <dbReference type="Rhea" id="RHEA-COMP:17342"/>
        <dbReference type="ChEBI" id="CHEBI:33019"/>
        <dbReference type="ChEBI" id="CHEBI:61557"/>
        <dbReference type="ChEBI" id="CHEBI:140395"/>
        <dbReference type="EC" id="2.7.7.6"/>
    </reaction>
</comment>
<comment type="subunit">
    <text evidence="1">Homodimer. The RNAP catalytic core consists of 2 alpha, 1 beta, 1 beta' and 1 omega subunit. When a sigma factor is associated with the core the holoenzyme is formed, which can initiate transcription.</text>
</comment>
<comment type="domain">
    <text evidence="1">The N-terminal domain is essential for RNAP assembly and basal transcription, whereas the C-terminal domain is involved in interaction with transcriptional regulators and with upstream promoter elements.</text>
</comment>
<comment type="similarity">
    <text evidence="1">Belongs to the RNA polymerase alpha chain family.</text>
</comment>
<organism>
    <name type="scientific">Streptococcus suis (strain 05ZYH33)</name>
    <dbReference type="NCBI Taxonomy" id="391295"/>
    <lineage>
        <taxon>Bacteria</taxon>
        <taxon>Bacillati</taxon>
        <taxon>Bacillota</taxon>
        <taxon>Bacilli</taxon>
        <taxon>Lactobacillales</taxon>
        <taxon>Streptococcaceae</taxon>
        <taxon>Streptococcus</taxon>
    </lineage>
</organism>
<reference key="1">
    <citation type="journal article" date="2007" name="PLoS ONE">
        <title>A glimpse of streptococcal toxic shock syndrome from comparative genomics of S. suis 2 Chinese isolates.</title>
        <authorList>
            <person name="Chen C."/>
            <person name="Tang J."/>
            <person name="Dong W."/>
            <person name="Wang C."/>
            <person name="Feng Y."/>
            <person name="Wang J."/>
            <person name="Zheng F."/>
            <person name="Pan X."/>
            <person name="Liu D."/>
            <person name="Li M."/>
            <person name="Song Y."/>
            <person name="Zhu X."/>
            <person name="Sun H."/>
            <person name="Feng T."/>
            <person name="Guo Z."/>
            <person name="Ju A."/>
            <person name="Ge J."/>
            <person name="Dong Y."/>
            <person name="Sun W."/>
            <person name="Jiang Y."/>
            <person name="Wang J."/>
            <person name="Yan J."/>
            <person name="Yang H."/>
            <person name="Wang X."/>
            <person name="Gao G.F."/>
            <person name="Yang R."/>
            <person name="Wang J."/>
            <person name="Yu J."/>
        </authorList>
    </citation>
    <scope>NUCLEOTIDE SEQUENCE [LARGE SCALE GENOMIC DNA]</scope>
    <source>
        <strain>05ZYH33</strain>
    </source>
</reference>
<accession>A4VSH8</accession>
<dbReference type="EC" id="2.7.7.6" evidence="1"/>
<dbReference type="EMBL" id="CP000407">
    <property type="protein sequence ID" value="ABP89067.1"/>
    <property type="molecule type" value="Genomic_DNA"/>
</dbReference>
<dbReference type="SMR" id="A4VSH8"/>
<dbReference type="STRING" id="391295.SSU05_0095"/>
<dbReference type="KEGG" id="ssu:SSU05_0095"/>
<dbReference type="eggNOG" id="COG0202">
    <property type="taxonomic scope" value="Bacteria"/>
</dbReference>
<dbReference type="HOGENOM" id="CLU_053084_0_1_9"/>
<dbReference type="GO" id="GO:0005737">
    <property type="term" value="C:cytoplasm"/>
    <property type="evidence" value="ECO:0007669"/>
    <property type="project" value="UniProtKB-ARBA"/>
</dbReference>
<dbReference type="GO" id="GO:0000428">
    <property type="term" value="C:DNA-directed RNA polymerase complex"/>
    <property type="evidence" value="ECO:0007669"/>
    <property type="project" value="UniProtKB-KW"/>
</dbReference>
<dbReference type="GO" id="GO:0003677">
    <property type="term" value="F:DNA binding"/>
    <property type="evidence" value="ECO:0007669"/>
    <property type="project" value="UniProtKB-UniRule"/>
</dbReference>
<dbReference type="GO" id="GO:0003899">
    <property type="term" value="F:DNA-directed RNA polymerase activity"/>
    <property type="evidence" value="ECO:0007669"/>
    <property type="project" value="UniProtKB-UniRule"/>
</dbReference>
<dbReference type="GO" id="GO:0046983">
    <property type="term" value="F:protein dimerization activity"/>
    <property type="evidence" value="ECO:0007669"/>
    <property type="project" value="InterPro"/>
</dbReference>
<dbReference type="GO" id="GO:0006351">
    <property type="term" value="P:DNA-templated transcription"/>
    <property type="evidence" value="ECO:0007669"/>
    <property type="project" value="UniProtKB-UniRule"/>
</dbReference>
<dbReference type="CDD" id="cd06928">
    <property type="entry name" value="RNAP_alpha_NTD"/>
    <property type="match status" value="1"/>
</dbReference>
<dbReference type="FunFam" id="1.10.150.20:FF:000001">
    <property type="entry name" value="DNA-directed RNA polymerase subunit alpha"/>
    <property type="match status" value="1"/>
</dbReference>
<dbReference type="FunFam" id="2.170.120.12:FF:000001">
    <property type="entry name" value="DNA-directed RNA polymerase subunit alpha"/>
    <property type="match status" value="1"/>
</dbReference>
<dbReference type="Gene3D" id="1.10.150.20">
    <property type="entry name" value="5' to 3' exonuclease, C-terminal subdomain"/>
    <property type="match status" value="1"/>
</dbReference>
<dbReference type="Gene3D" id="2.170.120.12">
    <property type="entry name" value="DNA-directed RNA polymerase, insert domain"/>
    <property type="match status" value="1"/>
</dbReference>
<dbReference type="Gene3D" id="3.30.1360.10">
    <property type="entry name" value="RNA polymerase, RBP11-like subunit"/>
    <property type="match status" value="1"/>
</dbReference>
<dbReference type="HAMAP" id="MF_00059">
    <property type="entry name" value="RNApol_bact_RpoA"/>
    <property type="match status" value="1"/>
</dbReference>
<dbReference type="InterPro" id="IPR011262">
    <property type="entry name" value="DNA-dir_RNA_pol_insert"/>
</dbReference>
<dbReference type="InterPro" id="IPR011263">
    <property type="entry name" value="DNA-dir_RNA_pol_RpoA/D/Rpb3"/>
</dbReference>
<dbReference type="InterPro" id="IPR011773">
    <property type="entry name" value="DNA-dir_RpoA"/>
</dbReference>
<dbReference type="InterPro" id="IPR036603">
    <property type="entry name" value="RBP11-like"/>
</dbReference>
<dbReference type="InterPro" id="IPR011260">
    <property type="entry name" value="RNAP_asu_C"/>
</dbReference>
<dbReference type="InterPro" id="IPR036643">
    <property type="entry name" value="RNApol_insert_sf"/>
</dbReference>
<dbReference type="NCBIfam" id="NF003513">
    <property type="entry name" value="PRK05182.1-2"/>
    <property type="match status" value="1"/>
</dbReference>
<dbReference type="NCBIfam" id="NF003515">
    <property type="entry name" value="PRK05182.2-1"/>
    <property type="match status" value="1"/>
</dbReference>
<dbReference type="NCBIfam" id="NF003518">
    <property type="entry name" value="PRK05182.2-4"/>
    <property type="match status" value="1"/>
</dbReference>
<dbReference type="NCBIfam" id="NF003519">
    <property type="entry name" value="PRK05182.2-5"/>
    <property type="match status" value="1"/>
</dbReference>
<dbReference type="NCBIfam" id="TIGR02027">
    <property type="entry name" value="rpoA"/>
    <property type="match status" value="1"/>
</dbReference>
<dbReference type="Pfam" id="PF01000">
    <property type="entry name" value="RNA_pol_A_bac"/>
    <property type="match status" value="1"/>
</dbReference>
<dbReference type="Pfam" id="PF03118">
    <property type="entry name" value="RNA_pol_A_CTD"/>
    <property type="match status" value="1"/>
</dbReference>
<dbReference type="Pfam" id="PF01193">
    <property type="entry name" value="RNA_pol_L"/>
    <property type="match status" value="1"/>
</dbReference>
<dbReference type="SMART" id="SM00662">
    <property type="entry name" value="RPOLD"/>
    <property type="match status" value="1"/>
</dbReference>
<dbReference type="SUPFAM" id="SSF47789">
    <property type="entry name" value="C-terminal domain of RNA polymerase alpha subunit"/>
    <property type="match status" value="1"/>
</dbReference>
<dbReference type="SUPFAM" id="SSF56553">
    <property type="entry name" value="Insert subdomain of RNA polymerase alpha subunit"/>
    <property type="match status" value="1"/>
</dbReference>
<dbReference type="SUPFAM" id="SSF55257">
    <property type="entry name" value="RBP11-like subunits of RNA polymerase"/>
    <property type="match status" value="1"/>
</dbReference>
<protein>
    <recommendedName>
        <fullName evidence="1">DNA-directed RNA polymerase subunit alpha</fullName>
        <shortName evidence="1">RNAP subunit alpha</shortName>
        <ecNumber evidence="1">2.7.7.6</ecNumber>
    </recommendedName>
    <alternativeName>
        <fullName evidence="1">RNA polymerase subunit alpha</fullName>
    </alternativeName>
    <alternativeName>
        <fullName evidence="1">Transcriptase subunit alpha</fullName>
    </alternativeName>
</protein>
<proteinExistence type="inferred from homology"/>
<feature type="chain" id="PRO_0000296874" description="DNA-directed RNA polymerase subunit alpha">
    <location>
        <begin position="1"/>
        <end position="312"/>
    </location>
</feature>
<feature type="region of interest" description="Alpha N-terminal domain (alpha-NTD)" evidence="1">
    <location>
        <begin position="1"/>
        <end position="226"/>
    </location>
</feature>
<feature type="region of interest" description="Alpha C-terminal domain (alpha-CTD)" evidence="1">
    <location>
        <begin position="242"/>
        <end position="312"/>
    </location>
</feature>
<gene>
    <name evidence="1" type="primary">rpoA</name>
    <name type="ordered locus">SSU05_0095</name>
</gene>
<name>RPOA_STRSY</name>
<evidence type="ECO:0000255" key="1">
    <source>
        <dbReference type="HAMAP-Rule" id="MF_00059"/>
    </source>
</evidence>
<keyword id="KW-0240">DNA-directed RNA polymerase</keyword>
<keyword id="KW-0548">Nucleotidyltransferase</keyword>
<keyword id="KW-0804">Transcription</keyword>
<keyword id="KW-0808">Transferase</keyword>
<sequence>MIEFEKPTITKIDENKDYGRFVIEPLERGYGTTLGNSLRRVLLASLPGAAVTSIKIDGVLHEFDTVPGVREDVMQIILNIKGIAVKSYVEDEKKIELDVVGPAEVTAGDILTDSDIEIVNPDHYLFTIADGATFKAVLTVNSGRGYVPAEDNKKDDAPVGTLAVDSIYTPVKKVNYQVEPARVGSNDGFDKLTLEINTNGTIIPEDALGLSARILMEHLGLFTDLTEVAKSAEVMKEAEVASDDRMLDRTIEELDLSVRSYNCLKRAGINTVFDLTEKTEPEMMKVRNLGRKSLEEVKVKLADLGLGLKKDK</sequence>